<proteinExistence type="inferred from homology"/>
<accession>Q6YQX5</accession>
<comment type="function">
    <text evidence="1">RNaseP catalyzes the removal of the 5'-leader sequence from pre-tRNA to produce the mature 5'-terminus. It can also cleave other RNA substrates such as 4.5S RNA. The protein component plays an auxiliary but essential role in vivo by binding to the 5'-leader sequence and broadening the substrate specificity of the ribozyme.</text>
</comment>
<comment type="catalytic activity">
    <reaction evidence="1">
        <text>Endonucleolytic cleavage of RNA, removing 5'-extranucleotides from tRNA precursor.</text>
        <dbReference type="EC" id="3.1.26.5"/>
    </reaction>
</comment>
<comment type="subunit">
    <text evidence="1">Consists of a catalytic RNA component (M1 or rnpB) and a protein subunit.</text>
</comment>
<comment type="similarity">
    <text evidence="1">Belongs to the RnpA family.</text>
</comment>
<dbReference type="EC" id="3.1.26.5" evidence="1"/>
<dbReference type="EMBL" id="AP006628">
    <property type="protein sequence ID" value="BAD04333.1"/>
    <property type="molecule type" value="Genomic_DNA"/>
</dbReference>
<dbReference type="SMR" id="Q6YQX5"/>
<dbReference type="STRING" id="262768.PAM_248"/>
<dbReference type="KEGG" id="poy:PAM_248"/>
<dbReference type="eggNOG" id="COG0594">
    <property type="taxonomic scope" value="Bacteria"/>
</dbReference>
<dbReference type="HOGENOM" id="CLU_117179_9_1_14"/>
<dbReference type="Proteomes" id="UP000002523">
    <property type="component" value="Chromosome"/>
</dbReference>
<dbReference type="GO" id="GO:0030677">
    <property type="term" value="C:ribonuclease P complex"/>
    <property type="evidence" value="ECO:0007669"/>
    <property type="project" value="TreeGrafter"/>
</dbReference>
<dbReference type="GO" id="GO:0042781">
    <property type="term" value="F:3'-tRNA processing endoribonuclease activity"/>
    <property type="evidence" value="ECO:0007669"/>
    <property type="project" value="TreeGrafter"/>
</dbReference>
<dbReference type="GO" id="GO:0004526">
    <property type="term" value="F:ribonuclease P activity"/>
    <property type="evidence" value="ECO:0007669"/>
    <property type="project" value="UniProtKB-UniRule"/>
</dbReference>
<dbReference type="GO" id="GO:0000049">
    <property type="term" value="F:tRNA binding"/>
    <property type="evidence" value="ECO:0007669"/>
    <property type="project" value="UniProtKB-UniRule"/>
</dbReference>
<dbReference type="GO" id="GO:0001682">
    <property type="term" value="P:tRNA 5'-leader removal"/>
    <property type="evidence" value="ECO:0007669"/>
    <property type="project" value="UniProtKB-UniRule"/>
</dbReference>
<dbReference type="Gene3D" id="3.30.230.10">
    <property type="match status" value="1"/>
</dbReference>
<dbReference type="HAMAP" id="MF_00227">
    <property type="entry name" value="RNase_P"/>
    <property type="match status" value="1"/>
</dbReference>
<dbReference type="InterPro" id="IPR020568">
    <property type="entry name" value="Ribosomal_Su5_D2-typ_SF"/>
</dbReference>
<dbReference type="InterPro" id="IPR014721">
    <property type="entry name" value="Ribsml_uS5_D2-typ_fold_subgr"/>
</dbReference>
<dbReference type="InterPro" id="IPR000100">
    <property type="entry name" value="RNase_P"/>
</dbReference>
<dbReference type="InterPro" id="IPR020539">
    <property type="entry name" value="RNase_P_CS"/>
</dbReference>
<dbReference type="NCBIfam" id="TIGR00188">
    <property type="entry name" value="rnpA"/>
    <property type="match status" value="1"/>
</dbReference>
<dbReference type="PANTHER" id="PTHR33992">
    <property type="entry name" value="RIBONUCLEASE P PROTEIN COMPONENT"/>
    <property type="match status" value="1"/>
</dbReference>
<dbReference type="PANTHER" id="PTHR33992:SF1">
    <property type="entry name" value="RIBONUCLEASE P PROTEIN COMPONENT"/>
    <property type="match status" value="1"/>
</dbReference>
<dbReference type="Pfam" id="PF00825">
    <property type="entry name" value="Ribonuclease_P"/>
    <property type="match status" value="1"/>
</dbReference>
<dbReference type="SUPFAM" id="SSF54211">
    <property type="entry name" value="Ribosomal protein S5 domain 2-like"/>
    <property type="match status" value="1"/>
</dbReference>
<dbReference type="PROSITE" id="PS00648">
    <property type="entry name" value="RIBONUCLEASE_P"/>
    <property type="match status" value="1"/>
</dbReference>
<reference key="1">
    <citation type="journal article" date="2004" name="Nat. Genet.">
        <title>Reductive evolution suggested from the complete genome sequence of a plant-pathogenic phytoplasma.</title>
        <authorList>
            <person name="Oshima K."/>
            <person name="Kakizawa S."/>
            <person name="Nishigawa H."/>
            <person name="Jung H.-Y."/>
            <person name="Wei W."/>
            <person name="Suzuki S."/>
            <person name="Arashida R."/>
            <person name="Nakata D."/>
            <person name="Miyata S."/>
            <person name="Ugaki M."/>
            <person name="Namba S."/>
        </authorList>
    </citation>
    <scope>NUCLEOTIDE SEQUENCE [LARGE SCALE GENOMIC DNA]</scope>
    <source>
        <strain>OY-M</strain>
    </source>
</reference>
<organism>
    <name type="scientific">Onion yellows phytoplasma (strain OY-M)</name>
    <dbReference type="NCBI Taxonomy" id="262768"/>
    <lineage>
        <taxon>Bacteria</taxon>
        <taxon>Bacillati</taxon>
        <taxon>Mycoplasmatota</taxon>
        <taxon>Mollicutes</taxon>
        <taxon>Acholeplasmatales</taxon>
        <taxon>Acholeplasmataceae</taxon>
        <taxon>Candidatus Phytoplasma</taxon>
        <taxon>16SrI (Aster yellows group)</taxon>
    </lineage>
</organism>
<evidence type="ECO:0000255" key="1">
    <source>
        <dbReference type="HAMAP-Rule" id="MF_00227"/>
    </source>
</evidence>
<sequence length="141" mass="16867">MWNLYFLKLLIDVLNIKVKNFRIIKKMKRKYILKKESEITPVFKSKKRYGNSLFIIYYVKQTAFPHFKFALSVGKKYGKAHERNLIKRRLRAIIRSVSPCLNPKMFFVIVIKAQAKNLTFQQLKTFFLQFATKTRILLSNK</sequence>
<feature type="chain" id="PRO_0000198502" description="Ribonuclease P protein component">
    <location>
        <begin position="1"/>
        <end position="141"/>
    </location>
</feature>
<protein>
    <recommendedName>
        <fullName evidence="1">Ribonuclease P protein component</fullName>
        <shortName evidence="1">RNase P protein</shortName>
        <shortName evidence="1">RNaseP protein</shortName>
        <ecNumber evidence="1">3.1.26.5</ecNumber>
    </recommendedName>
    <alternativeName>
        <fullName evidence="1">Protein C5</fullName>
    </alternativeName>
</protein>
<name>RNPA_ONYPE</name>
<gene>
    <name evidence="1" type="primary">rnpA</name>
    <name type="ordered locus">PAM_248</name>
</gene>
<keyword id="KW-0255">Endonuclease</keyword>
<keyword id="KW-0378">Hydrolase</keyword>
<keyword id="KW-0540">Nuclease</keyword>
<keyword id="KW-0694">RNA-binding</keyword>
<keyword id="KW-0819">tRNA processing</keyword>